<feature type="chain" id="PRO_0000110429" description="Beta-ketoacyl-[acyl-carrier-protein] synthase III">
    <location>
        <begin position="1"/>
        <end position="328"/>
    </location>
</feature>
<feature type="region of interest" description="ACP-binding" evidence="1">
    <location>
        <begin position="254"/>
        <end position="258"/>
    </location>
</feature>
<feature type="active site" evidence="1">
    <location>
        <position position="113"/>
    </location>
</feature>
<feature type="active site" evidence="1">
    <location>
        <position position="253"/>
    </location>
</feature>
<feature type="active site" evidence="1">
    <location>
        <position position="283"/>
    </location>
</feature>
<name>FABH_FUSNN</name>
<comment type="function">
    <text evidence="1">Catalyzes the condensation reaction of fatty acid synthesis by the addition to an acyl acceptor of two carbons from malonyl-ACP. Catalyzes the first condensation reaction which initiates fatty acid synthesis and may therefore play a role in governing the total rate of fatty acid production. Possesses both acetoacetyl-ACP synthase and acetyl transacylase activities. Its substrate specificity determines the biosynthesis of branched-chain and/or straight-chain of fatty acids.</text>
</comment>
<comment type="catalytic activity">
    <reaction evidence="1">
        <text>malonyl-[ACP] + acetyl-CoA + H(+) = 3-oxobutanoyl-[ACP] + CO2 + CoA</text>
        <dbReference type="Rhea" id="RHEA:12080"/>
        <dbReference type="Rhea" id="RHEA-COMP:9623"/>
        <dbReference type="Rhea" id="RHEA-COMP:9625"/>
        <dbReference type="ChEBI" id="CHEBI:15378"/>
        <dbReference type="ChEBI" id="CHEBI:16526"/>
        <dbReference type="ChEBI" id="CHEBI:57287"/>
        <dbReference type="ChEBI" id="CHEBI:57288"/>
        <dbReference type="ChEBI" id="CHEBI:78449"/>
        <dbReference type="ChEBI" id="CHEBI:78450"/>
        <dbReference type="EC" id="2.3.1.180"/>
    </reaction>
</comment>
<comment type="pathway">
    <text evidence="1">Lipid metabolism; fatty acid biosynthesis.</text>
</comment>
<comment type="subunit">
    <text evidence="1">Homodimer.</text>
</comment>
<comment type="subcellular location">
    <subcellularLocation>
        <location evidence="1">Cytoplasm</location>
    </subcellularLocation>
</comment>
<comment type="domain">
    <text evidence="1">The last Arg residue of the ACP-binding site is essential for the weak association between ACP/AcpP and FabH.</text>
</comment>
<comment type="similarity">
    <text evidence="1">Belongs to the thiolase-like superfamily. FabH family.</text>
</comment>
<dbReference type="EC" id="2.3.1.180" evidence="1"/>
<dbReference type="EMBL" id="AE009951">
    <property type="protein sequence ID" value="AAL94354.1"/>
    <property type="molecule type" value="Genomic_DNA"/>
</dbReference>
<dbReference type="RefSeq" id="NP_603055.1">
    <property type="nucleotide sequence ID" value="NC_003454.1"/>
</dbReference>
<dbReference type="RefSeq" id="WP_011016180.1">
    <property type="nucleotide sequence ID" value="NZ_OZ209243.1"/>
</dbReference>
<dbReference type="SMR" id="Q8RGX7"/>
<dbReference type="FunCoup" id="Q8RGX7">
    <property type="interactions" value="327"/>
</dbReference>
<dbReference type="STRING" id="190304.FN0148"/>
<dbReference type="PaxDb" id="190304-FN0148"/>
<dbReference type="EnsemblBacteria" id="AAL94354">
    <property type="protein sequence ID" value="AAL94354"/>
    <property type="gene ID" value="FN0148"/>
</dbReference>
<dbReference type="KEGG" id="fnu:FN0148"/>
<dbReference type="PATRIC" id="fig|190304.8.peg.728"/>
<dbReference type="eggNOG" id="COG0332">
    <property type="taxonomic scope" value="Bacteria"/>
</dbReference>
<dbReference type="HOGENOM" id="CLU_039592_3_1_0"/>
<dbReference type="InParanoid" id="Q8RGX7"/>
<dbReference type="BioCyc" id="FNUC190304:G1FZS-751-MONOMER"/>
<dbReference type="UniPathway" id="UPA00094"/>
<dbReference type="Proteomes" id="UP000002521">
    <property type="component" value="Chromosome"/>
</dbReference>
<dbReference type="GO" id="GO:0005737">
    <property type="term" value="C:cytoplasm"/>
    <property type="evidence" value="ECO:0007669"/>
    <property type="project" value="UniProtKB-SubCell"/>
</dbReference>
<dbReference type="GO" id="GO:0004315">
    <property type="term" value="F:3-oxoacyl-[acyl-carrier-protein] synthase activity"/>
    <property type="evidence" value="ECO:0007669"/>
    <property type="project" value="InterPro"/>
</dbReference>
<dbReference type="GO" id="GO:0033818">
    <property type="term" value="F:beta-ketoacyl-acyl-carrier-protein synthase III activity"/>
    <property type="evidence" value="ECO:0007669"/>
    <property type="project" value="UniProtKB-UniRule"/>
</dbReference>
<dbReference type="GO" id="GO:0006633">
    <property type="term" value="P:fatty acid biosynthetic process"/>
    <property type="evidence" value="ECO:0007669"/>
    <property type="project" value="UniProtKB-UniRule"/>
</dbReference>
<dbReference type="CDD" id="cd00830">
    <property type="entry name" value="KAS_III"/>
    <property type="match status" value="1"/>
</dbReference>
<dbReference type="FunFam" id="3.40.47.10:FF:000004">
    <property type="entry name" value="3-oxoacyl-[acyl-carrier-protein] synthase 3"/>
    <property type="match status" value="1"/>
</dbReference>
<dbReference type="Gene3D" id="3.40.47.10">
    <property type="match status" value="1"/>
</dbReference>
<dbReference type="HAMAP" id="MF_01815">
    <property type="entry name" value="FabH"/>
    <property type="match status" value="1"/>
</dbReference>
<dbReference type="InterPro" id="IPR013747">
    <property type="entry name" value="ACP_syn_III_C"/>
</dbReference>
<dbReference type="InterPro" id="IPR013751">
    <property type="entry name" value="ACP_syn_III_N"/>
</dbReference>
<dbReference type="InterPro" id="IPR004655">
    <property type="entry name" value="FabH"/>
</dbReference>
<dbReference type="InterPro" id="IPR016039">
    <property type="entry name" value="Thiolase-like"/>
</dbReference>
<dbReference type="NCBIfam" id="TIGR00747">
    <property type="entry name" value="fabH"/>
    <property type="match status" value="1"/>
</dbReference>
<dbReference type="NCBIfam" id="NF006829">
    <property type="entry name" value="PRK09352.1"/>
    <property type="match status" value="1"/>
</dbReference>
<dbReference type="PANTHER" id="PTHR43091">
    <property type="entry name" value="3-OXOACYL-[ACYL-CARRIER-PROTEIN] SYNTHASE"/>
    <property type="match status" value="1"/>
</dbReference>
<dbReference type="PANTHER" id="PTHR43091:SF1">
    <property type="entry name" value="BETA-KETOACYL-[ACYL-CARRIER-PROTEIN] SYNTHASE III, CHLOROPLASTIC"/>
    <property type="match status" value="1"/>
</dbReference>
<dbReference type="Pfam" id="PF08545">
    <property type="entry name" value="ACP_syn_III"/>
    <property type="match status" value="1"/>
</dbReference>
<dbReference type="Pfam" id="PF08541">
    <property type="entry name" value="ACP_syn_III_C"/>
    <property type="match status" value="1"/>
</dbReference>
<dbReference type="SUPFAM" id="SSF53901">
    <property type="entry name" value="Thiolase-like"/>
    <property type="match status" value="1"/>
</dbReference>
<gene>
    <name evidence="1" type="primary">fabH</name>
    <name type="ordered locus">FN0148</name>
</gene>
<reference key="1">
    <citation type="journal article" date="2002" name="J. Bacteriol.">
        <title>Genome sequence and analysis of the oral bacterium Fusobacterium nucleatum strain ATCC 25586.</title>
        <authorList>
            <person name="Kapatral V."/>
            <person name="Anderson I."/>
            <person name="Ivanova N."/>
            <person name="Reznik G."/>
            <person name="Los T."/>
            <person name="Lykidis A."/>
            <person name="Bhattacharyya A."/>
            <person name="Bartman A."/>
            <person name="Gardner W."/>
            <person name="Grechkin G."/>
            <person name="Zhu L."/>
            <person name="Vasieva O."/>
            <person name="Chu L."/>
            <person name="Kogan Y."/>
            <person name="Chaga O."/>
            <person name="Goltsman E."/>
            <person name="Bernal A."/>
            <person name="Larsen N."/>
            <person name="D'Souza M."/>
            <person name="Walunas T."/>
            <person name="Pusch G."/>
            <person name="Haselkorn R."/>
            <person name="Fonstein M."/>
            <person name="Kyrpides N.C."/>
            <person name="Overbeek R."/>
        </authorList>
    </citation>
    <scope>NUCLEOTIDE SEQUENCE [LARGE SCALE GENOMIC DNA]</scope>
    <source>
        <strain>ATCC 25586 / DSM 15643 / BCRC 10681 / CIP 101130 / JCM 8532 / KCTC 2640 / LMG 13131 / VPI 4355</strain>
    </source>
</reference>
<accession>Q8RGX7</accession>
<evidence type="ECO:0000255" key="1">
    <source>
        <dbReference type="HAMAP-Rule" id="MF_01815"/>
    </source>
</evidence>
<protein>
    <recommendedName>
        <fullName evidence="1">Beta-ketoacyl-[acyl-carrier-protein] synthase III</fullName>
        <shortName evidence="1">Beta-ketoacyl-ACP synthase III</shortName>
        <shortName evidence="1">KAS III</shortName>
        <ecNumber evidence="1">2.3.1.180</ecNumber>
    </recommendedName>
    <alternativeName>
        <fullName evidence="1">3-oxoacyl-[acyl-carrier-protein] synthase 3</fullName>
    </alternativeName>
    <alternativeName>
        <fullName evidence="1">3-oxoacyl-[acyl-carrier-protein] synthase III</fullName>
    </alternativeName>
</protein>
<sequence>MQSIGIKGMGYYVPENVFTNFDFEKIIDTSDEWIRTRTGIIERRFASKDQATSDLATEASLKAIKNAKISKEDVDMIILATTTADYIAQGAACIVQNKLGLKKIPCFDLNAACTGFIYGLEVAYSLVKSGLYKNILVIGAETLSRIVDMQNRNTCVLFGDGAAAAIIGEVEKGYGFLGFSIGAEGEDNMILKVPAGGSKKPNNEETIKNRENFVIMKGQDVFKFAVSTLPKVTSDALEKAKLKVNDLSMVFPHQANLRIIESAAKRMKFPLEKFYMNLSRYGNTSSASVGIALGEAIEKGLVKKGDNIALTGFGGGLTYGSTIIKWAY</sequence>
<keyword id="KW-0012">Acyltransferase</keyword>
<keyword id="KW-0963">Cytoplasm</keyword>
<keyword id="KW-0275">Fatty acid biosynthesis</keyword>
<keyword id="KW-0276">Fatty acid metabolism</keyword>
<keyword id="KW-0444">Lipid biosynthesis</keyword>
<keyword id="KW-0443">Lipid metabolism</keyword>
<keyword id="KW-0511">Multifunctional enzyme</keyword>
<keyword id="KW-1185">Reference proteome</keyword>
<keyword id="KW-0808">Transferase</keyword>
<proteinExistence type="inferred from homology"/>
<organism>
    <name type="scientific">Fusobacterium nucleatum subsp. nucleatum (strain ATCC 25586 / DSM 15643 / BCRC 10681 / CIP 101130 / JCM 8532 / KCTC 2640 / LMG 13131 / VPI 4355)</name>
    <dbReference type="NCBI Taxonomy" id="190304"/>
    <lineage>
        <taxon>Bacteria</taxon>
        <taxon>Fusobacteriati</taxon>
        <taxon>Fusobacteriota</taxon>
        <taxon>Fusobacteriia</taxon>
        <taxon>Fusobacteriales</taxon>
        <taxon>Fusobacteriaceae</taxon>
        <taxon>Fusobacterium</taxon>
    </lineage>
</organism>